<keyword id="KW-1003">Cell membrane</keyword>
<keyword id="KW-0325">Glycoprotein</keyword>
<keyword id="KW-0406">Ion transport</keyword>
<keyword id="KW-0472">Membrane</keyword>
<keyword id="KW-1185">Reference proteome</keyword>
<keyword id="KW-0732">Signal</keyword>
<keyword id="KW-0812">Transmembrane</keyword>
<keyword id="KW-1133">Transmembrane helix</keyword>
<keyword id="KW-0813">Transport</keyword>
<keyword id="KW-0862">Zinc</keyword>
<keyword id="KW-0864">Zinc transport</keyword>
<proteinExistence type="evidence at protein level"/>
<protein>
    <recommendedName>
        <fullName>Zinc transporter 3</fullName>
    </recommendedName>
    <alternativeName>
        <fullName>ZRT/IRT-like protein 3</fullName>
        <shortName>OsZIP3</shortName>
    </alternativeName>
</protein>
<sequence length="364" mass="38134">MGAKKHTLQVLPWLLLFAQHTAASACDCANTTDGADRQGAMKLKLIAIASILAAGAAGVLVPVIGRSMAALRPDGDIFFAVKAFAAGVILATGMVHILPAAFDALTSPCLKRGGGDRNPFPFAGLVSMSAAVSTMVVDSLAAGYYHRSQFRKARPVDNINVHKHAGDERAEHAQHINAHTHGGHTHSHGDIVVCGSPEEGSVAESIRHKVVSQVLELGILVHSVIIGVSLGASVRPSTIRPLVGALSFHQFFEGVGLGGCIVQANFKVRATVIMAIFFSLTAPVGIVLGIAISSSYNVHSSTAFVVEGVFNSASAGILIYMSLVDLLATDFNNPKLQINTKLQLMAYLALFLGAGLMSMLAIWA</sequence>
<reference key="1">
    <citation type="journal article" date="2003" name="Plant Physiol.">
        <title>Differential metal selectivity and gene expression of two zinc transporters from rice.</title>
        <authorList>
            <person name="Ramesh S.A."/>
            <person name="Shin R."/>
            <person name="Eide D.J."/>
            <person name="Schachtman D.P."/>
        </authorList>
    </citation>
    <scope>NUCLEOTIDE SEQUENCE [MRNA]</scope>
    <scope>FUNCTION</scope>
    <scope>BIOPHYSICOCHEMICAL PROPERTIES</scope>
    <scope>TISSUE SPECIFICITY</scope>
    <scope>INDUCTION</scope>
    <source>
        <strain>cv. Nipponbare</strain>
    </source>
</reference>
<reference key="2">
    <citation type="journal article" date="2002" name="Nature">
        <title>Sequence and analysis of rice chromosome 4.</title>
        <authorList>
            <person name="Feng Q."/>
            <person name="Zhang Y."/>
            <person name="Hao P."/>
            <person name="Wang S."/>
            <person name="Fu G."/>
            <person name="Huang Y."/>
            <person name="Li Y."/>
            <person name="Zhu J."/>
            <person name="Liu Y."/>
            <person name="Hu X."/>
            <person name="Jia P."/>
            <person name="Zhang Y."/>
            <person name="Zhao Q."/>
            <person name="Ying K."/>
            <person name="Yu S."/>
            <person name="Tang Y."/>
            <person name="Weng Q."/>
            <person name="Zhang L."/>
            <person name="Lu Y."/>
            <person name="Mu J."/>
            <person name="Lu Y."/>
            <person name="Zhang L.S."/>
            <person name="Yu Z."/>
            <person name="Fan D."/>
            <person name="Liu X."/>
            <person name="Lu T."/>
            <person name="Li C."/>
            <person name="Wu Y."/>
            <person name="Sun T."/>
            <person name="Lei H."/>
            <person name="Li T."/>
            <person name="Hu H."/>
            <person name="Guan J."/>
            <person name="Wu M."/>
            <person name="Zhang R."/>
            <person name="Zhou B."/>
            <person name="Chen Z."/>
            <person name="Chen L."/>
            <person name="Jin Z."/>
            <person name="Wang R."/>
            <person name="Yin H."/>
            <person name="Cai Z."/>
            <person name="Ren S."/>
            <person name="Lv G."/>
            <person name="Gu W."/>
            <person name="Zhu G."/>
            <person name="Tu Y."/>
            <person name="Jia J."/>
            <person name="Zhang Y."/>
            <person name="Chen J."/>
            <person name="Kang H."/>
            <person name="Chen X."/>
            <person name="Shao C."/>
            <person name="Sun Y."/>
            <person name="Hu Q."/>
            <person name="Zhang X."/>
            <person name="Zhang W."/>
            <person name="Wang L."/>
            <person name="Ding C."/>
            <person name="Sheng H."/>
            <person name="Gu J."/>
            <person name="Chen S."/>
            <person name="Ni L."/>
            <person name="Zhu F."/>
            <person name="Chen W."/>
            <person name="Lan L."/>
            <person name="Lai Y."/>
            <person name="Cheng Z."/>
            <person name="Gu M."/>
            <person name="Jiang J."/>
            <person name="Li J."/>
            <person name="Hong G."/>
            <person name="Xue Y."/>
            <person name="Han B."/>
        </authorList>
    </citation>
    <scope>NUCLEOTIDE SEQUENCE [LARGE SCALE GENOMIC DNA]</scope>
    <source>
        <strain>cv. Nipponbare</strain>
    </source>
</reference>
<reference key="3">
    <citation type="journal article" date="2005" name="Nature">
        <title>The map-based sequence of the rice genome.</title>
        <authorList>
            <consortium name="International rice genome sequencing project (IRGSP)"/>
        </authorList>
    </citation>
    <scope>NUCLEOTIDE SEQUENCE [LARGE SCALE GENOMIC DNA]</scope>
    <source>
        <strain>cv. Nipponbare</strain>
    </source>
</reference>
<reference key="4">
    <citation type="journal article" date="2008" name="Nucleic Acids Res.">
        <title>The rice annotation project database (RAP-DB): 2008 update.</title>
        <authorList>
            <consortium name="The rice annotation project (RAP)"/>
        </authorList>
    </citation>
    <scope>GENOME REANNOTATION</scope>
    <source>
        <strain>cv. Nipponbare</strain>
    </source>
</reference>
<reference key="5">
    <citation type="journal article" date="2013" name="Rice">
        <title>Improvement of the Oryza sativa Nipponbare reference genome using next generation sequence and optical map data.</title>
        <authorList>
            <person name="Kawahara Y."/>
            <person name="de la Bastide M."/>
            <person name="Hamilton J.P."/>
            <person name="Kanamori H."/>
            <person name="McCombie W.R."/>
            <person name="Ouyang S."/>
            <person name="Schwartz D.C."/>
            <person name="Tanaka T."/>
            <person name="Wu J."/>
            <person name="Zhou S."/>
            <person name="Childs K.L."/>
            <person name="Davidson R.M."/>
            <person name="Lin H."/>
            <person name="Quesada-Ocampo L."/>
            <person name="Vaillancourt B."/>
            <person name="Sakai H."/>
            <person name="Lee S.S."/>
            <person name="Kim J."/>
            <person name="Numa H."/>
            <person name="Itoh T."/>
            <person name="Buell C.R."/>
            <person name="Matsumoto T."/>
        </authorList>
    </citation>
    <scope>GENOME REANNOTATION</scope>
    <source>
        <strain>cv. Nipponbare</strain>
    </source>
</reference>
<reference key="6">
    <citation type="journal article" date="2005" name="PLoS Biol.">
        <title>The genomes of Oryza sativa: a history of duplications.</title>
        <authorList>
            <person name="Yu J."/>
            <person name="Wang J."/>
            <person name="Lin W."/>
            <person name="Li S."/>
            <person name="Li H."/>
            <person name="Zhou J."/>
            <person name="Ni P."/>
            <person name="Dong W."/>
            <person name="Hu S."/>
            <person name="Zeng C."/>
            <person name="Zhang J."/>
            <person name="Zhang Y."/>
            <person name="Li R."/>
            <person name="Xu Z."/>
            <person name="Li S."/>
            <person name="Li X."/>
            <person name="Zheng H."/>
            <person name="Cong L."/>
            <person name="Lin L."/>
            <person name="Yin J."/>
            <person name="Geng J."/>
            <person name="Li G."/>
            <person name="Shi J."/>
            <person name="Liu J."/>
            <person name="Lv H."/>
            <person name="Li J."/>
            <person name="Wang J."/>
            <person name="Deng Y."/>
            <person name="Ran L."/>
            <person name="Shi X."/>
            <person name="Wang X."/>
            <person name="Wu Q."/>
            <person name="Li C."/>
            <person name="Ren X."/>
            <person name="Wang J."/>
            <person name="Wang X."/>
            <person name="Li D."/>
            <person name="Liu D."/>
            <person name="Zhang X."/>
            <person name="Ji Z."/>
            <person name="Zhao W."/>
            <person name="Sun Y."/>
            <person name="Zhang Z."/>
            <person name="Bao J."/>
            <person name="Han Y."/>
            <person name="Dong L."/>
            <person name="Ji J."/>
            <person name="Chen P."/>
            <person name="Wu S."/>
            <person name="Liu J."/>
            <person name="Xiao Y."/>
            <person name="Bu D."/>
            <person name="Tan J."/>
            <person name="Yang L."/>
            <person name="Ye C."/>
            <person name="Zhang J."/>
            <person name="Xu J."/>
            <person name="Zhou Y."/>
            <person name="Yu Y."/>
            <person name="Zhang B."/>
            <person name="Zhuang S."/>
            <person name="Wei H."/>
            <person name="Liu B."/>
            <person name="Lei M."/>
            <person name="Yu H."/>
            <person name="Li Y."/>
            <person name="Xu H."/>
            <person name="Wei S."/>
            <person name="He X."/>
            <person name="Fang L."/>
            <person name="Zhang Z."/>
            <person name="Zhang Y."/>
            <person name="Huang X."/>
            <person name="Su Z."/>
            <person name="Tong W."/>
            <person name="Li J."/>
            <person name="Tong Z."/>
            <person name="Li S."/>
            <person name="Ye J."/>
            <person name="Wang L."/>
            <person name="Fang L."/>
            <person name="Lei T."/>
            <person name="Chen C.-S."/>
            <person name="Chen H.-C."/>
            <person name="Xu Z."/>
            <person name="Li H."/>
            <person name="Huang H."/>
            <person name="Zhang F."/>
            <person name="Xu H."/>
            <person name="Li N."/>
            <person name="Zhao C."/>
            <person name="Li S."/>
            <person name="Dong L."/>
            <person name="Huang Y."/>
            <person name="Li L."/>
            <person name="Xi Y."/>
            <person name="Qi Q."/>
            <person name="Li W."/>
            <person name="Zhang B."/>
            <person name="Hu W."/>
            <person name="Zhang Y."/>
            <person name="Tian X."/>
            <person name="Jiao Y."/>
            <person name="Liang X."/>
            <person name="Jin J."/>
            <person name="Gao L."/>
            <person name="Zheng W."/>
            <person name="Hao B."/>
            <person name="Liu S.-M."/>
            <person name="Wang W."/>
            <person name="Yuan L."/>
            <person name="Cao M."/>
            <person name="McDermott J."/>
            <person name="Samudrala R."/>
            <person name="Wang J."/>
            <person name="Wong G.K.-S."/>
            <person name="Yang H."/>
        </authorList>
    </citation>
    <scope>NUCLEOTIDE SEQUENCE [LARGE SCALE GENOMIC DNA]</scope>
    <source>
        <strain>cv. Nipponbare</strain>
    </source>
</reference>
<reference key="7">
    <citation type="journal article" date="2003" name="Science">
        <title>Collection, mapping, and annotation of over 28,000 cDNA clones from japonica rice.</title>
        <authorList>
            <consortium name="The rice full-length cDNA consortium"/>
        </authorList>
    </citation>
    <scope>NUCLEOTIDE SEQUENCE [LARGE SCALE MRNA]</scope>
    <source>
        <strain>cv. Nipponbare</strain>
    </source>
</reference>
<dbReference type="EMBL" id="AY323915">
    <property type="protein sequence ID" value="AAP85537.1"/>
    <property type="molecule type" value="mRNA"/>
</dbReference>
<dbReference type="EMBL" id="AL731610">
    <property type="protein sequence ID" value="CAE05208.2"/>
    <property type="molecule type" value="Genomic_DNA"/>
</dbReference>
<dbReference type="EMBL" id="AP008210">
    <property type="protein sequence ID" value="BAF15765.1"/>
    <property type="molecule type" value="Genomic_DNA"/>
</dbReference>
<dbReference type="EMBL" id="AP014960">
    <property type="protein sequence ID" value="BAS90972.1"/>
    <property type="molecule type" value="Genomic_DNA"/>
</dbReference>
<dbReference type="EMBL" id="CM000141">
    <property type="protein sequence ID" value="EAZ31960.1"/>
    <property type="molecule type" value="Genomic_DNA"/>
</dbReference>
<dbReference type="EMBL" id="AK069804">
    <property type="protein sequence ID" value="BAG91613.1"/>
    <property type="molecule type" value="mRNA"/>
</dbReference>
<dbReference type="RefSeq" id="XP_015635611.1">
    <property type="nucleotide sequence ID" value="XM_015780125.1"/>
</dbReference>
<dbReference type="SMR" id="Q7XLD4"/>
<dbReference type="FunCoup" id="Q7XLD4">
    <property type="interactions" value="1840"/>
</dbReference>
<dbReference type="STRING" id="39947.Q7XLD4"/>
<dbReference type="GlyCosmos" id="Q7XLD4">
    <property type="glycosylation" value="1 site, No reported glycans"/>
</dbReference>
<dbReference type="PaxDb" id="39947-Q7XLD4"/>
<dbReference type="EnsemblPlants" id="Os04t0613000-01">
    <property type="protein sequence ID" value="Os04t0613000-01"/>
    <property type="gene ID" value="Os04g0613000"/>
</dbReference>
<dbReference type="Gramene" id="Os04t0613000-01">
    <property type="protein sequence ID" value="Os04t0613000-01"/>
    <property type="gene ID" value="Os04g0613000"/>
</dbReference>
<dbReference type="KEGG" id="dosa:Os04g0613000"/>
<dbReference type="eggNOG" id="KOG1558">
    <property type="taxonomic scope" value="Eukaryota"/>
</dbReference>
<dbReference type="HOGENOM" id="CLU_027089_3_0_1"/>
<dbReference type="InParanoid" id="Q7XLD4"/>
<dbReference type="OMA" id="ACDCANT"/>
<dbReference type="OrthoDB" id="448280at2759"/>
<dbReference type="Proteomes" id="UP000000763">
    <property type="component" value="Chromosome 4"/>
</dbReference>
<dbReference type="Proteomes" id="UP000007752">
    <property type="component" value="Chromosome 4"/>
</dbReference>
<dbReference type="Proteomes" id="UP000059680">
    <property type="component" value="Chromosome 4"/>
</dbReference>
<dbReference type="GO" id="GO:0005886">
    <property type="term" value="C:plasma membrane"/>
    <property type="evidence" value="ECO:0000318"/>
    <property type="project" value="GO_Central"/>
</dbReference>
<dbReference type="GO" id="GO:0005385">
    <property type="term" value="F:zinc ion transmembrane transporter activity"/>
    <property type="evidence" value="ECO:0000318"/>
    <property type="project" value="GO_Central"/>
</dbReference>
<dbReference type="GO" id="GO:0071577">
    <property type="term" value="P:zinc ion transmembrane transport"/>
    <property type="evidence" value="ECO:0000318"/>
    <property type="project" value="GO_Central"/>
</dbReference>
<dbReference type="GO" id="GO:0006829">
    <property type="term" value="P:zinc ion transport"/>
    <property type="evidence" value="ECO:0000314"/>
    <property type="project" value="UniProtKB"/>
</dbReference>
<dbReference type="InterPro" id="IPR003689">
    <property type="entry name" value="ZIP"/>
</dbReference>
<dbReference type="InterPro" id="IPR004698">
    <property type="entry name" value="Zn/Fe_permease_fun/pln"/>
</dbReference>
<dbReference type="NCBIfam" id="TIGR00820">
    <property type="entry name" value="zip"/>
    <property type="match status" value="1"/>
</dbReference>
<dbReference type="PANTHER" id="PTHR11040:SF181">
    <property type="entry name" value="ZINC TRANSPORTER 1"/>
    <property type="match status" value="1"/>
</dbReference>
<dbReference type="PANTHER" id="PTHR11040">
    <property type="entry name" value="ZINC/IRON TRANSPORTER"/>
    <property type="match status" value="1"/>
</dbReference>
<dbReference type="Pfam" id="PF02535">
    <property type="entry name" value="Zip"/>
    <property type="match status" value="1"/>
</dbReference>
<name>ZIP3_ORYSJ</name>
<comment type="function">
    <text evidence="2">Zinc transporter that may mediate zinc uptake from the rhizosphere. Seems specific to zinc ions and may not transport other divalent cations.</text>
</comment>
<comment type="biophysicochemical properties">
    <kinetics>
        <KM evidence="2">18.5 uM for Zn(2+)</KM>
    </kinetics>
</comment>
<comment type="subcellular location">
    <subcellularLocation>
        <location evidence="3">Cell membrane</location>
        <topology evidence="3">Multi-pass membrane protein</topology>
    </subcellularLocation>
</comment>
<comment type="tissue specificity">
    <text evidence="2">Expressed in vascular bundles of stems.</text>
</comment>
<comment type="induction">
    <text evidence="2">By zinc deficiency in shoots.</text>
</comment>
<comment type="similarity">
    <text evidence="3">Belongs to the ZIP transporter (TC 2.A.5) family.</text>
</comment>
<gene>
    <name type="primary">ZIP3</name>
    <name type="ordered locus">Os04g0613000</name>
    <name type="ordered locus">LOC_Os04g52310</name>
    <name type="ORF">OsJ_16134</name>
    <name type="ORF">OSJNBa0070C17.15</name>
</gene>
<accession>Q7XLD4</accession>
<accession>A0A0P0WEM2</accession>
<accession>Q7XJB8</accession>
<feature type="signal peptide" evidence="1">
    <location>
        <begin position="1"/>
        <end position="23"/>
    </location>
</feature>
<feature type="chain" id="PRO_0000398327" description="Zinc transporter 3">
    <location>
        <begin position="24"/>
        <end position="364"/>
    </location>
</feature>
<feature type="topological domain" description="Extracellular" evidence="1">
    <location>
        <begin position="24"/>
        <end position="44"/>
    </location>
</feature>
<feature type="transmembrane region" description="Helical" evidence="1">
    <location>
        <begin position="45"/>
        <end position="65"/>
    </location>
</feature>
<feature type="topological domain" description="Cytoplasmic" evidence="1">
    <location>
        <begin position="66"/>
        <end position="76"/>
    </location>
</feature>
<feature type="transmembrane region" description="Helical" evidence="1">
    <location>
        <begin position="77"/>
        <end position="97"/>
    </location>
</feature>
<feature type="topological domain" description="Extracellular" evidence="1">
    <location>
        <begin position="98"/>
        <end position="119"/>
    </location>
</feature>
<feature type="transmembrane region" description="Helical" evidence="1">
    <location>
        <begin position="120"/>
        <end position="140"/>
    </location>
</feature>
<feature type="topological domain" description="Cytoplasmic" evidence="1">
    <location>
        <begin position="141"/>
        <end position="213"/>
    </location>
</feature>
<feature type="transmembrane region" description="Helical" evidence="1">
    <location>
        <begin position="214"/>
        <end position="234"/>
    </location>
</feature>
<feature type="topological domain" description="Extracellular" evidence="1">
    <location>
        <begin position="235"/>
        <end position="241"/>
    </location>
</feature>
<feature type="transmembrane region" description="Helical" evidence="1">
    <location>
        <begin position="242"/>
        <end position="262"/>
    </location>
</feature>
<feature type="topological domain" description="Cytoplasmic" evidence="1">
    <location>
        <begin position="263"/>
        <end position="271"/>
    </location>
</feature>
<feature type="transmembrane region" description="Helical" evidence="1">
    <location>
        <begin position="272"/>
        <end position="292"/>
    </location>
</feature>
<feature type="topological domain" description="Extracellular" evidence="1">
    <location>
        <begin position="293"/>
        <end position="303"/>
    </location>
</feature>
<feature type="transmembrane region" description="Helical" evidence="1">
    <location>
        <begin position="304"/>
        <end position="324"/>
    </location>
</feature>
<feature type="topological domain" description="Cytoplasmic" evidence="1">
    <location>
        <begin position="325"/>
        <end position="343"/>
    </location>
</feature>
<feature type="transmembrane region" description="Helical" evidence="1">
    <location>
        <begin position="344"/>
        <end position="364"/>
    </location>
</feature>
<feature type="glycosylation site" description="N-linked (GlcNAc...) asparagine" evidence="1">
    <location>
        <position position="30"/>
    </location>
</feature>
<organism>
    <name type="scientific">Oryza sativa subsp. japonica</name>
    <name type="common">Rice</name>
    <dbReference type="NCBI Taxonomy" id="39947"/>
    <lineage>
        <taxon>Eukaryota</taxon>
        <taxon>Viridiplantae</taxon>
        <taxon>Streptophyta</taxon>
        <taxon>Embryophyta</taxon>
        <taxon>Tracheophyta</taxon>
        <taxon>Spermatophyta</taxon>
        <taxon>Magnoliopsida</taxon>
        <taxon>Liliopsida</taxon>
        <taxon>Poales</taxon>
        <taxon>Poaceae</taxon>
        <taxon>BOP clade</taxon>
        <taxon>Oryzoideae</taxon>
        <taxon>Oryzeae</taxon>
        <taxon>Oryzinae</taxon>
        <taxon>Oryza</taxon>
        <taxon>Oryza sativa</taxon>
    </lineage>
</organism>
<evidence type="ECO:0000255" key="1"/>
<evidence type="ECO:0000269" key="2">
    <source>
    </source>
</evidence>
<evidence type="ECO:0000305" key="3"/>